<dbReference type="EC" id="1.2.1.41" evidence="1"/>
<dbReference type="EMBL" id="CP000903">
    <property type="protein sequence ID" value="ABY43986.1"/>
    <property type="molecule type" value="Genomic_DNA"/>
</dbReference>
<dbReference type="RefSeq" id="WP_002142283.1">
    <property type="nucleotide sequence ID" value="NC_010184.1"/>
</dbReference>
<dbReference type="SMR" id="A9VK31"/>
<dbReference type="KEGG" id="bwe:BcerKBAB4_2789"/>
<dbReference type="eggNOG" id="COG0014">
    <property type="taxonomic scope" value="Bacteria"/>
</dbReference>
<dbReference type="HOGENOM" id="CLU_030231_0_0_9"/>
<dbReference type="UniPathway" id="UPA00098">
    <property type="reaction ID" value="UER00360"/>
</dbReference>
<dbReference type="Proteomes" id="UP000002154">
    <property type="component" value="Chromosome"/>
</dbReference>
<dbReference type="GO" id="GO:0005737">
    <property type="term" value="C:cytoplasm"/>
    <property type="evidence" value="ECO:0007669"/>
    <property type="project" value="UniProtKB-SubCell"/>
</dbReference>
<dbReference type="GO" id="GO:0004350">
    <property type="term" value="F:glutamate-5-semialdehyde dehydrogenase activity"/>
    <property type="evidence" value="ECO:0007669"/>
    <property type="project" value="UniProtKB-UniRule"/>
</dbReference>
<dbReference type="GO" id="GO:0050661">
    <property type="term" value="F:NADP binding"/>
    <property type="evidence" value="ECO:0007669"/>
    <property type="project" value="InterPro"/>
</dbReference>
<dbReference type="GO" id="GO:0055129">
    <property type="term" value="P:L-proline biosynthetic process"/>
    <property type="evidence" value="ECO:0007669"/>
    <property type="project" value="UniProtKB-UniRule"/>
</dbReference>
<dbReference type="CDD" id="cd07079">
    <property type="entry name" value="ALDH_F18-19_ProA-GPR"/>
    <property type="match status" value="1"/>
</dbReference>
<dbReference type="FunFam" id="3.40.309.10:FF:000006">
    <property type="entry name" value="Gamma-glutamyl phosphate reductase"/>
    <property type="match status" value="1"/>
</dbReference>
<dbReference type="Gene3D" id="3.40.605.10">
    <property type="entry name" value="Aldehyde Dehydrogenase, Chain A, domain 1"/>
    <property type="match status" value="1"/>
</dbReference>
<dbReference type="Gene3D" id="3.40.309.10">
    <property type="entry name" value="Aldehyde Dehydrogenase, Chain A, domain 2"/>
    <property type="match status" value="1"/>
</dbReference>
<dbReference type="HAMAP" id="MF_00412">
    <property type="entry name" value="ProA"/>
    <property type="match status" value="1"/>
</dbReference>
<dbReference type="InterPro" id="IPR016161">
    <property type="entry name" value="Ald_DH/histidinol_DH"/>
</dbReference>
<dbReference type="InterPro" id="IPR016163">
    <property type="entry name" value="Ald_DH_C"/>
</dbReference>
<dbReference type="InterPro" id="IPR016162">
    <property type="entry name" value="Ald_DH_N"/>
</dbReference>
<dbReference type="InterPro" id="IPR015590">
    <property type="entry name" value="Aldehyde_DH_dom"/>
</dbReference>
<dbReference type="InterPro" id="IPR020593">
    <property type="entry name" value="G-glutamylP_reductase_CS"/>
</dbReference>
<dbReference type="InterPro" id="IPR012134">
    <property type="entry name" value="Glu-5-SA_DH"/>
</dbReference>
<dbReference type="InterPro" id="IPR000965">
    <property type="entry name" value="GPR_dom"/>
</dbReference>
<dbReference type="NCBIfam" id="NF001221">
    <property type="entry name" value="PRK00197.1"/>
    <property type="match status" value="1"/>
</dbReference>
<dbReference type="NCBIfam" id="TIGR00407">
    <property type="entry name" value="proA"/>
    <property type="match status" value="1"/>
</dbReference>
<dbReference type="PANTHER" id="PTHR11063:SF8">
    <property type="entry name" value="DELTA-1-PYRROLINE-5-CARBOXYLATE SYNTHASE"/>
    <property type="match status" value="1"/>
</dbReference>
<dbReference type="PANTHER" id="PTHR11063">
    <property type="entry name" value="GLUTAMATE SEMIALDEHYDE DEHYDROGENASE"/>
    <property type="match status" value="1"/>
</dbReference>
<dbReference type="Pfam" id="PF00171">
    <property type="entry name" value="Aldedh"/>
    <property type="match status" value="1"/>
</dbReference>
<dbReference type="PIRSF" id="PIRSF000151">
    <property type="entry name" value="GPR"/>
    <property type="match status" value="1"/>
</dbReference>
<dbReference type="SUPFAM" id="SSF53720">
    <property type="entry name" value="ALDH-like"/>
    <property type="match status" value="1"/>
</dbReference>
<dbReference type="PROSITE" id="PS01223">
    <property type="entry name" value="PROA"/>
    <property type="match status" value="1"/>
</dbReference>
<feature type="chain" id="PRO_1000193571" description="Gamma-glutamyl phosphate reductase">
    <location>
        <begin position="1"/>
        <end position="415"/>
    </location>
</feature>
<accession>A9VK31</accession>
<protein>
    <recommendedName>
        <fullName evidence="1">Gamma-glutamyl phosphate reductase</fullName>
        <shortName evidence="1">GPR</shortName>
        <ecNumber evidence="1">1.2.1.41</ecNumber>
    </recommendedName>
    <alternativeName>
        <fullName evidence="1">Glutamate-5-semialdehyde dehydrogenase</fullName>
    </alternativeName>
    <alternativeName>
        <fullName evidence="1">Glutamyl-gamma-semialdehyde dehydrogenase</fullName>
        <shortName evidence="1">GSA dehydrogenase</shortName>
    </alternativeName>
</protein>
<sequence>MNEVVAKGKKAKEIARELVLKSTNQKNEALAAIADQMIVETAYILEENKRDIEEGKAKGFSDSLLDRLMLNEQRIIDMAEGIKQLIELRDPVGECVSAWERPNGLSIQEMRVPLGVVGMIYEARPNVTVDAATICLKTGNAVILRGSSSAINSNKAIVSVIHRALKQTSLPPESVQLIEDTTRDSAKQLFTLNEYLDVLIPRGGKQLIDTVVREASVPVLETGAGNCHIFIDETADKQMAFNIIINAKTQRPSVCNAIETIVLHEKWAQQFGSELFSSLKERGVELRGDSKSLAIDSSIALASEEDWETEFLSLTLAVKVVSTTEEAIHHINTYGSMHSEAIITENEENVSKFFTSVDAAALYHNASTRFTDGSEFGFGAEIGISTQKLHVRGPMGLPALTSTKYVIRGNGQIRR</sequence>
<organism>
    <name type="scientific">Bacillus mycoides (strain KBAB4)</name>
    <name type="common">Bacillus weihenstephanensis</name>
    <dbReference type="NCBI Taxonomy" id="315730"/>
    <lineage>
        <taxon>Bacteria</taxon>
        <taxon>Bacillati</taxon>
        <taxon>Bacillota</taxon>
        <taxon>Bacilli</taxon>
        <taxon>Bacillales</taxon>
        <taxon>Bacillaceae</taxon>
        <taxon>Bacillus</taxon>
        <taxon>Bacillus cereus group</taxon>
    </lineage>
</organism>
<comment type="function">
    <text evidence="1">Catalyzes the NADPH-dependent reduction of L-glutamate 5-phosphate into L-glutamate 5-semialdehyde and phosphate. The product spontaneously undergoes cyclization to form 1-pyrroline-5-carboxylate.</text>
</comment>
<comment type="catalytic activity">
    <reaction evidence="1">
        <text>L-glutamate 5-semialdehyde + phosphate + NADP(+) = L-glutamyl 5-phosphate + NADPH + H(+)</text>
        <dbReference type="Rhea" id="RHEA:19541"/>
        <dbReference type="ChEBI" id="CHEBI:15378"/>
        <dbReference type="ChEBI" id="CHEBI:43474"/>
        <dbReference type="ChEBI" id="CHEBI:57783"/>
        <dbReference type="ChEBI" id="CHEBI:58066"/>
        <dbReference type="ChEBI" id="CHEBI:58274"/>
        <dbReference type="ChEBI" id="CHEBI:58349"/>
        <dbReference type="EC" id="1.2.1.41"/>
    </reaction>
</comment>
<comment type="pathway">
    <text evidence="1">Amino-acid biosynthesis; L-proline biosynthesis; L-glutamate 5-semialdehyde from L-glutamate: step 2/2.</text>
</comment>
<comment type="subcellular location">
    <subcellularLocation>
        <location evidence="1">Cytoplasm</location>
    </subcellularLocation>
</comment>
<comment type="similarity">
    <text evidence="1">Belongs to the gamma-glutamyl phosphate reductase family.</text>
</comment>
<proteinExistence type="inferred from homology"/>
<name>PROA_BACMK</name>
<gene>
    <name evidence="1" type="primary">proA</name>
    <name type="ordered locus">BcerKBAB4_2789</name>
</gene>
<keyword id="KW-0028">Amino-acid biosynthesis</keyword>
<keyword id="KW-0963">Cytoplasm</keyword>
<keyword id="KW-0521">NADP</keyword>
<keyword id="KW-0560">Oxidoreductase</keyword>
<keyword id="KW-0641">Proline biosynthesis</keyword>
<reference key="1">
    <citation type="journal article" date="2008" name="Chem. Biol. Interact.">
        <title>Extending the Bacillus cereus group genomics to putative food-borne pathogens of different toxicity.</title>
        <authorList>
            <person name="Lapidus A."/>
            <person name="Goltsman E."/>
            <person name="Auger S."/>
            <person name="Galleron N."/>
            <person name="Segurens B."/>
            <person name="Dossat C."/>
            <person name="Land M.L."/>
            <person name="Broussolle V."/>
            <person name="Brillard J."/>
            <person name="Guinebretiere M.-H."/>
            <person name="Sanchis V."/>
            <person name="Nguen-the C."/>
            <person name="Lereclus D."/>
            <person name="Richardson P."/>
            <person name="Wincker P."/>
            <person name="Weissenbach J."/>
            <person name="Ehrlich S.D."/>
            <person name="Sorokin A."/>
        </authorList>
    </citation>
    <scope>NUCLEOTIDE SEQUENCE [LARGE SCALE GENOMIC DNA]</scope>
    <source>
        <strain>KBAB4</strain>
    </source>
</reference>
<evidence type="ECO:0000255" key="1">
    <source>
        <dbReference type="HAMAP-Rule" id="MF_00412"/>
    </source>
</evidence>